<name>ACT22_DICDI</name>
<dbReference type="EC" id="3.6.4.-" evidence="2"/>
<dbReference type="EMBL" id="AAFI02000013">
    <property type="protein sequence ID" value="EAL69792.1"/>
    <property type="molecule type" value="Genomic_DNA"/>
</dbReference>
<dbReference type="RefSeq" id="XP_643865.1">
    <property type="nucleotide sequence ID" value="XM_638773.1"/>
</dbReference>
<dbReference type="SMR" id="Q553U6"/>
<dbReference type="FunCoup" id="Q553U6">
    <property type="interactions" value="352"/>
</dbReference>
<dbReference type="STRING" id="44689.Q553U6"/>
<dbReference type="PaxDb" id="44689-DDB0220460"/>
<dbReference type="EnsemblProtists" id="EAL69792">
    <property type="protein sequence ID" value="EAL69792"/>
    <property type="gene ID" value="DDB_G0275023"/>
</dbReference>
<dbReference type="GeneID" id="8619916"/>
<dbReference type="KEGG" id="ddi:DDB_G0275023"/>
<dbReference type="dictyBase" id="DDB_G0275023">
    <property type="gene designation" value="act22"/>
</dbReference>
<dbReference type="VEuPathDB" id="AmoebaDB:DDB_G0275023"/>
<dbReference type="eggNOG" id="KOG0676">
    <property type="taxonomic scope" value="Eukaryota"/>
</dbReference>
<dbReference type="HOGENOM" id="CLU_027965_0_2_1"/>
<dbReference type="InParanoid" id="Q553U6"/>
<dbReference type="OMA" id="EDAPRCC"/>
<dbReference type="PhylomeDB" id="Q553U6"/>
<dbReference type="PRO" id="PR:Q553U6"/>
<dbReference type="Proteomes" id="UP000002195">
    <property type="component" value="Chromosome 2"/>
</dbReference>
<dbReference type="GO" id="GO:0015629">
    <property type="term" value="C:actin cytoskeleton"/>
    <property type="evidence" value="ECO:0000250"/>
    <property type="project" value="dictyBase"/>
</dbReference>
<dbReference type="GO" id="GO:0005938">
    <property type="term" value="C:cell cortex"/>
    <property type="evidence" value="ECO:0000314"/>
    <property type="project" value="dictyBase"/>
</dbReference>
<dbReference type="GO" id="GO:0031252">
    <property type="term" value="C:cell leading edge"/>
    <property type="evidence" value="ECO:0000314"/>
    <property type="project" value="dictyBase"/>
</dbReference>
<dbReference type="GO" id="GO:0060187">
    <property type="term" value="C:cell pole"/>
    <property type="evidence" value="ECO:0000314"/>
    <property type="project" value="dictyBase"/>
</dbReference>
<dbReference type="GO" id="GO:0005911">
    <property type="term" value="C:cell-cell junction"/>
    <property type="evidence" value="ECO:0000314"/>
    <property type="project" value="dictyBase"/>
</dbReference>
<dbReference type="GO" id="GO:0030864">
    <property type="term" value="C:cortical actin cytoskeleton"/>
    <property type="evidence" value="ECO:0000314"/>
    <property type="project" value="dictyBase"/>
</dbReference>
<dbReference type="GO" id="GO:0032009">
    <property type="term" value="C:early phagosome"/>
    <property type="evidence" value="ECO:0000314"/>
    <property type="project" value="dictyBase"/>
</dbReference>
<dbReference type="GO" id="GO:0061836">
    <property type="term" value="C:intranuclear rod"/>
    <property type="evidence" value="ECO:0000314"/>
    <property type="project" value="dictyBase"/>
</dbReference>
<dbReference type="GO" id="GO:0030027">
    <property type="term" value="C:lamellipodium"/>
    <property type="evidence" value="ECO:0000314"/>
    <property type="project" value="dictyBase"/>
</dbReference>
<dbReference type="GO" id="GO:0001891">
    <property type="term" value="C:phagocytic cup"/>
    <property type="evidence" value="ECO:0000314"/>
    <property type="project" value="dictyBase"/>
</dbReference>
<dbReference type="GO" id="GO:0045335">
    <property type="term" value="C:phagocytic vesicle"/>
    <property type="evidence" value="ECO:0000314"/>
    <property type="project" value="dictyBase"/>
</dbReference>
<dbReference type="GO" id="GO:0032010">
    <property type="term" value="C:phagolysosome"/>
    <property type="evidence" value="ECO:0000314"/>
    <property type="project" value="dictyBase"/>
</dbReference>
<dbReference type="GO" id="GO:0005524">
    <property type="term" value="F:ATP binding"/>
    <property type="evidence" value="ECO:0007669"/>
    <property type="project" value="UniProtKB-KW"/>
</dbReference>
<dbReference type="GO" id="GO:0016787">
    <property type="term" value="F:hydrolase activity"/>
    <property type="evidence" value="ECO:0007669"/>
    <property type="project" value="UniProtKB-KW"/>
</dbReference>
<dbReference type="GO" id="GO:0017022">
    <property type="term" value="F:myosin binding"/>
    <property type="evidence" value="ECO:0000250"/>
    <property type="project" value="dictyBase"/>
</dbReference>
<dbReference type="GO" id="GO:0005200">
    <property type="term" value="F:structural constituent of cytoskeleton"/>
    <property type="evidence" value="ECO:0000250"/>
    <property type="project" value="dictyBase"/>
</dbReference>
<dbReference type="GO" id="GO:0000902">
    <property type="term" value="P:cell morphogenesis"/>
    <property type="evidence" value="ECO:0000304"/>
    <property type="project" value="dictyBase"/>
</dbReference>
<dbReference type="GO" id="GO:0006909">
    <property type="term" value="P:phagocytosis"/>
    <property type="evidence" value="ECO:0000270"/>
    <property type="project" value="dictyBase"/>
</dbReference>
<dbReference type="GO" id="GO:0001778">
    <property type="term" value="P:plasma membrane repair"/>
    <property type="evidence" value="ECO:0000314"/>
    <property type="project" value="dictyBase"/>
</dbReference>
<dbReference type="GO" id="GO:0051591">
    <property type="term" value="P:response to cAMP"/>
    <property type="evidence" value="ECO:0000314"/>
    <property type="project" value="dictyBase"/>
</dbReference>
<dbReference type="CDD" id="cd10224">
    <property type="entry name" value="ASKHA_NBD_actin"/>
    <property type="match status" value="1"/>
</dbReference>
<dbReference type="FunFam" id="3.30.420.40:FF:000291">
    <property type="entry name" value="Actin, alpha skeletal muscle"/>
    <property type="match status" value="1"/>
</dbReference>
<dbReference type="FunFam" id="3.90.640.10:FF:000047">
    <property type="entry name" value="Actin, alpha skeletal muscle"/>
    <property type="match status" value="1"/>
</dbReference>
<dbReference type="FunFam" id="3.30.420.40:FF:000404">
    <property type="entry name" value="Major actin"/>
    <property type="match status" value="1"/>
</dbReference>
<dbReference type="FunFam" id="3.30.420.40:FF:000058">
    <property type="entry name" value="Putative actin-related protein 5"/>
    <property type="match status" value="1"/>
</dbReference>
<dbReference type="Gene3D" id="3.30.420.40">
    <property type="match status" value="2"/>
</dbReference>
<dbReference type="Gene3D" id="3.90.640.10">
    <property type="entry name" value="Actin, Chain A, domain 4"/>
    <property type="match status" value="1"/>
</dbReference>
<dbReference type="InterPro" id="IPR004000">
    <property type="entry name" value="Actin"/>
</dbReference>
<dbReference type="InterPro" id="IPR020902">
    <property type="entry name" value="Actin/actin-like_CS"/>
</dbReference>
<dbReference type="InterPro" id="IPR004001">
    <property type="entry name" value="Actin_CS"/>
</dbReference>
<dbReference type="InterPro" id="IPR043129">
    <property type="entry name" value="ATPase_NBD"/>
</dbReference>
<dbReference type="PANTHER" id="PTHR11937">
    <property type="entry name" value="ACTIN"/>
    <property type="match status" value="1"/>
</dbReference>
<dbReference type="Pfam" id="PF00022">
    <property type="entry name" value="Actin"/>
    <property type="match status" value="1"/>
</dbReference>
<dbReference type="PRINTS" id="PR00190">
    <property type="entry name" value="ACTIN"/>
</dbReference>
<dbReference type="SMART" id="SM00268">
    <property type="entry name" value="ACTIN"/>
    <property type="match status" value="1"/>
</dbReference>
<dbReference type="SUPFAM" id="SSF53067">
    <property type="entry name" value="Actin-like ATPase domain"/>
    <property type="match status" value="2"/>
</dbReference>
<dbReference type="PROSITE" id="PS00406">
    <property type="entry name" value="ACTINS_1"/>
    <property type="match status" value="1"/>
</dbReference>
<dbReference type="PROSITE" id="PS00432">
    <property type="entry name" value="ACTINS_2"/>
    <property type="match status" value="1"/>
</dbReference>
<dbReference type="PROSITE" id="PS01132">
    <property type="entry name" value="ACTINS_ACT_LIKE"/>
    <property type="match status" value="1"/>
</dbReference>
<protein>
    <recommendedName>
        <fullName>Putative actin-22</fullName>
        <ecNumber evidence="2">3.6.4.-</ecNumber>
    </recommendedName>
</protein>
<sequence>MDGEDVQALVIDNGSGMCKAGFAGDDAPRAVFPSIVGRPRHTGVMVGMGQKDSYVGDEAQSKRGILTLKYPIEHGIVTNWDDMEKIWHHTFYNELRVAPEEHPVLLTEAPLNPKANREKMTQIMFETFNTPAMYVAIQAVLSLYASGRTTGIVMDSGDGVSHTVPIYEGYALPHAILRLDLAGRDLTDYMMKILTERGYSFTTTAEREIVRDIKEKLAYVALDFEAEMQTAASSSSLEKSYELPDGQVITIGNERFRCPEALFQPSFLGMESAGIHETTFNSIMKCDVDIRKDLYGNVVLSGGTTMFPGIADRMNKELTSLAPSTMKIKIVAPPERKYSVWIGGSILASLSTFQQMWISKEEYDESGPSIVHRKCF</sequence>
<organism>
    <name type="scientific">Dictyostelium discoideum</name>
    <name type="common">Social amoeba</name>
    <dbReference type="NCBI Taxonomy" id="44689"/>
    <lineage>
        <taxon>Eukaryota</taxon>
        <taxon>Amoebozoa</taxon>
        <taxon>Evosea</taxon>
        <taxon>Eumycetozoa</taxon>
        <taxon>Dictyostelia</taxon>
        <taxon>Dictyosteliales</taxon>
        <taxon>Dictyosteliaceae</taxon>
        <taxon>Dictyostelium</taxon>
    </lineage>
</organism>
<accession>Q553U6</accession>
<accession>Q869Z2</accession>
<keyword id="KW-0067">ATP-binding</keyword>
<keyword id="KW-0963">Cytoplasm</keyword>
<keyword id="KW-0206">Cytoskeleton</keyword>
<keyword id="KW-0378">Hydrolase</keyword>
<keyword id="KW-0547">Nucleotide-binding</keyword>
<keyword id="KW-1185">Reference proteome</keyword>
<evidence type="ECO:0000250" key="1"/>
<evidence type="ECO:0000250" key="2">
    <source>
        <dbReference type="UniProtKB" id="P68137"/>
    </source>
</evidence>
<evidence type="ECO:0000305" key="3"/>
<feature type="chain" id="PRO_0000312672" description="Putative actin-22">
    <location>
        <begin position="1"/>
        <end position="376"/>
    </location>
</feature>
<proteinExistence type="inferred from homology"/>
<comment type="function">
    <text evidence="1">Actins are highly conserved proteins that are involved in various types of cell motility and are ubiquitously expressed in all eukaryotic cells. Multiple isoforms are involved in various cellular functions such as cytoskeleton structure, cell mobility, chromosome movement and muscle contraction (By similarity).</text>
</comment>
<comment type="catalytic activity">
    <reaction evidence="2">
        <text>ATP + H2O = ADP + phosphate + H(+)</text>
        <dbReference type="Rhea" id="RHEA:13065"/>
        <dbReference type="ChEBI" id="CHEBI:15377"/>
        <dbReference type="ChEBI" id="CHEBI:15378"/>
        <dbReference type="ChEBI" id="CHEBI:30616"/>
        <dbReference type="ChEBI" id="CHEBI:43474"/>
        <dbReference type="ChEBI" id="CHEBI:456216"/>
    </reaction>
</comment>
<comment type="subcellular location">
    <subcellularLocation>
        <location evidence="1">Cytoplasm</location>
        <location evidence="1">Cytoskeleton</location>
    </subcellularLocation>
</comment>
<comment type="similarity">
    <text evidence="3">Belongs to the actin family.</text>
</comment>
<reference key="1">
    <citation type="journal article" date="2002" name="Nature">
        <title>Sequence and analysis of chromosome 2 of Dictyostelium discoideum.</title>
        <authorList>
            <person name="Gloeckner G."/>
            <person name="Eichinger L."/>
            <person name="Szafranski K."/>
            <person name="Pachebat J.A."/>
            <person name="Bankier A.T."/>
            <person name="Dear P.H."/>
            <person name="Lehmann R."/>
            <person name="Baumgart C."/>
            <person name="Parra G."/>
            <person name="Abril J.F."/>
            <person name="Guigo R."/>
            <person name="Kumpf K."/>
            <person name="Tunggal B."/>
            <person name="Cox E.C."/>
            <person name="Quail M.A."/>
            <person name="Platzer M."/>
            <person name="Rosenthal A."/>
            <person name="Noegel A.A."/>
        </authorList>
    </citation>
    <scope>NUCLEOTIDE SEQUENCE [LARGE SCALE GENOMIC DNA]</scope>
    <source>
        <strain>AX4</strain>
    </source>
</reference>
<reference key="2">
    <citation type="journal article" date="2005" name="Nature">
        <title>The genome of the social amoeba Dictyostelium discoideum.</title>
        <authorList>
            <person name="Eichinger L."/>
            <person name="Pachebat J.A."/>
            <person name="Gloeckner G."/>
            <person name="Rajandream M.A."/>
            <person name="Sucgang R."/>
            <person name="Berriman M."/>
            <person name="Song J."/>
            <person name="Olsen R."/>
            <person name="Szafranski K."/>
            <person name="Xu Q."/>
            <person name="Tunggal B."/>
            <person name="Kummerfeld S."/>
            <person name="Madera M."/>
            <person name="Konfortov B.A."/>
            <person name="Rivero F."/>
            <person name="Bankier A.T."/>
            <person name="Lehmann R."/>
            <person name="Hamlin N."/>
            <person name="Davies R."/>
            <person name="Gaudet P."/>
            <person name="Fey P."/>
            <person name="Pilcher K."/>
            <person name="Chen G."/>
            <person name="Saunders D."/>
            <person name="Sodergren E.J."/>
            <person name="Davis P."/>
            <person name="Kerhornou A."/>
            <person name="Nie X."/>
            <person name="Hall N."/>
            <person name="Anjard C."/>
            <person name="Hemphill L."/>
            <person name="Bason N."/>
            <person name="Farbrother P."/>
            <person name="Desany B."/>
            <person name="Just E."/>
            <person name="Morio T."/>
            <person name="Rost R."/>
            <person name="Churcher C.M."/>
            <person name="Cooper J."/>
            <person name="Haydock S."/>
            <person name="van Driessche N."/>
            <person name="Cronin A."/>
            <person name="Goodhead I."/>
            <person name="Muzny D.M."/>
            <person name="Mourier T."/>
            <person name="Pain A."/>
            <person name="Lu M."/>
            <person name="Harper D."/>
            <person name="Lindsay R."/>
            <person name="Hauser H."/>
            <person name="James K.D."/>
            <person name="Quiles M."/>
            <person name="Madan Babu M."/>
            <person name="Saito T."/>
            <person name="Buchrieser C."/>
            <person name="Wardroper A."/>
            <person name="Felder M."/>
            <person name="Thangavelu M."/>
            <person name="Johnson D."/>
            <person name="Knights A."/>
            <person name="Loulseged H."/>
            <person name="Mungall K.L."/>
            <person name="Oliver K."/>
            <person name="Price C."/>
            <person name="Quail M.A."/>
            <person name="Urushihara H."/>
            <person name="Hernandez J."/>
            <person name="Rabbinowitsch E."/>
            <person name="Steffen D."/>
            <person name="Sanders M."/>
            <person name="Ma J."/>
            <person name="Kohara Y."/>
            <person name="Sharp S."/>
            <person name="Simmonds M.N."/>
            <person name="Spiegler S."/>
            <person name="Tivey A."/>
            <person name="Sugano S."/>
            <person name="White B."/>
            <person name="Walker D."/>
            <person name="Woodward J.R."/>
            <person name="Winckler T."/>
            <person name="Tanaka Y."/>
            <person name="Shaulsky G."/>
            <person name="Schleicher M."/>
            <person name="Weinstock G.M."/>
            <person name="Rosenthal A."/>
            <person name="Cox E.C."/>
            <person name="Chisholm R.L."/>
            <person name="Gibbs R.A."/>
            <person name="Loomis W.F."/>
            <person name="Platzer M."/>
            <person name="Kay R.R."/>
            <person name="Williams J.G."/>
            <person name="Dear P.H."/>
            <person name="Noegel A.A."/>
            <person name="Barrell B.G."/>
            <person name="Kuspa A."/>
        </authorList>
    </citation>
    <scope>NUCLEOTIDE SEQUENCE [LARGE SCALE GENOMIC DNA]</scope>
    <source>
        <strain>AX4</strain>
    </source>
</reference>
<gene>
    <name type="primary">act22</name>
    <name type="ORF">DDB_G0275023</name>
</gene>